<comment type="function">
    <text evidence="1">Fluoride-specific ion channel. Important for reducing fluoride concentration in the cell, thus reducing its toxicity.</text>
</comment>
<comment type="catalytic activity">
    <reaction evidence="1">
        <text>fluoride(in) = fluoride(out)</text>
        <dbReference type="Rhea" id="RHEA:76159"/>
        <dbReference type="ChEBI" id="CHEBI:17051"/>
    </reaction>
    <physiologicalReaction direction="left-to-right" evidence="1">
        <dbReference type="Rhea" id="RHEA:76160"/>
    </physiologicalReaction>
</comment>
<comment type="activity regulation">
    <text evidence="1">Na(+) is not transported, but it plays an essential structural role and its presence is essential for fluoride channel function.</text>
</comment>
<comment type="subcellular location">
    <subcellularLocation>
        <location evidence="1">Cell membrane</location>
        <topology evidence="1">Multi-pass membrane protein</topology>
    </subcellularLocation>
</comment>
<comment type="similarity">
    <text evidence="1">Belongs to the fluoride channel Fluc/FEX (TC 1.A.43) family.</text>
</comment>
<sequence>MTASTALTVAIWIGVMLIGGIGSVLRFLVDRSVARRLARTFPYGTLTVNITGAALLGFLAGLALPKDAALLAGTGFVGAYTTFSTWMLETQRLGEDRQMVSALANIVVSVVLGLAAALLGQWIAQI</sequence>
<dbReference type="EMBL" id="LT708304">
    <property type="protein sequence ID" value="SIU01722.1"/>
    <property type="molecule type" value="Genomic_DNA"/>
</dbReference>
<dbReference type="RefSeq" id="NP_856742.1">
    <property type="nucleotide sequence ID" value="NC_002945.3"/>
</dbReference>
<dbReference type="SMR" id="P63865"/>
<dbReference type="KEGG" id="mbo:BQ2027_MB3097"/>
<dbReference type="PATRIC" id="fig|233413.5.peg.3402"/>
<dbReference type="Proteomes" id="UP000001419">
    <property type="component" value="Chromosome"/>
</dbReference>
<dbReference type="GO" id="GO:0005886">
    <property type="term" value="C:plasma membrane"/>
    <property type="evidence" value="ECO:0007669"/>
    <property type="project" value="UniProtKB-SubCell"/>
</dbReference>
<dbReference type="GO" id="GO:0062054">
    <property type="term" value="F:fluoride channel activity"/>
    <property type="evidence" value="ECO:0007669"/>
    <property type="project" value="UniProtKB-UniRule"/>
</dbReference>
<dbReference type="GO" id="GO:0046872">
    <property type="term" value="F:metal ion binding"/>
    <property type="evidence" value="ECO:0007669"/>
    <property type="project" value="UniProtKB-KW"/>
</dbReference>
<dbReference type="GO" id="GO:0140114">
    <property type="term" value="P:cellular detoxification of fluoride"/>
    <property type="evidence" value="ECO:0007669"/>
    <property type="project" value="UniProtKB-UniRule"/>
</dbReference>
<dbReference type="HAMAP" id="MF_00454">
    <property type="entry name" value="FluC"/>
    <property type="match status" value="1"/>
</dbReference>
<dbReference type="InterPro" id="IPR003691">
    <property type="entry name" value="FluC"/>
</dbReference>
<dbReference type="NCBIfam" id="TIGR00494">
    <property type="entry name" value="crcB"/>
    <property type="match status" value="1"/>
</dbReference>
<dbReference type="NCBIfam" id="NF010824">
    <property type="entry name" value="PRK14228.1"/>
    <property type="match status" value="1"/>
</dbReference>
<dbReference type="PANTHER" id="PTHR28259">
    <property type="entry name" value="FLUORIDE EXPORT PROTEIN 1-RELATED"/>
    <property type="match status" value="1"/>
</dbReference>
<dbReference type="PANTHER" id="PTHR28259:SF1">
    <property type="entry name" value="FLUORIDE EXPORT PROTEIN 1-RELATED"/>
    <property type="match status" value="1"/>
</dbReference>
<dbReference type="Pfam" id="PF02537">
    <property type="entry name" value="CRCB"/>
    <property type="match status" value="1"/>
</dbReference>
<reference key="1">
    <citation type="journal article" date="2003" name="Proc. Natl. Acad. Sci. U.S.A.">
        <title>The complete genome sequence of Mycobacterium bovis.</title>
        <authorList>
            <person name="Garnier T."/>
            <person name="Eiglmeier K."/>
            <person name="Camus J.-C."/>
            <person name="Medina N."/>
            <person name="Mansoor H."/>
            <person name="Pryor M."/>
            <person name="Duthoy S."/>
            <person name="Grondin S."/>
            <person name="Lacroix C."/>
            <person name="Monsempe C."/>
            <person name="Simon S."/>
            <person name="Harris B."/>
            <person name="Atkin R."/>
            <person name="Doggett J."/>
            <person name="Mayes R."/>
            <person name="Keating L."/>
            <person name="Wheeler P.R."/>
            <person name="Parkhill J."/>
            <person name="Barrell B.G."/>
            <person name="Cole S.T."/>
            <person name="Gordon S.V."/>
            <person name="Hewinson R.G."/>
        </authorList>
    </citation>
    <scope>NUCLEOTIDE SEQUENCE [LARGE SCALE GENOMIC DNA]</scope>
    <source>
        <strain>ATCC BAA-935 / AF2122/97</strain>
    </source>
</reference>
<reference key="2">
    <citation type="journal article" date="2017" name="Genome Announc.">
        <title>Updated reference genome sequence and annotation of Mycobacterium bovis AF2122/97.</title>
        <authorList>
            <person name="Malone K.M."/>
            <person name="Farrell D."/>
            <person name="Stuber T.P."/>
            <person name="Schubert O.T."/>
            <person name="Aebersold R."/>
            <person name="Robbe-Austerman S."/>
            <person name="Gordon S.V."/>
        </authorList>
    </citation>
    <scope>NUCLEOTIDE SEQUENCE [LARGE SCALE GENOMIC DNA]</scope>
    <scope>GENOME REANNOTATION</scope>
    <source>
        <strain>ATCC BAA-935 / AF2122/97</strain>
    </source>
</reference>
<accession>P63865</accession>
<accession>A0A1R3Y308</accession>
<accession>P95088</accession>
<accession>X2BN96</accession>
<gene>
    <name evidence="1" type="primary">fluC2</name>
    <name evidence="1" type="synonym">crcB2</name>
    <name type="ordered locus">BQ2027_MB3097</name>
</gene>
<keyword id="KW-1003">Cell membrane</keyword>
<keyword id="KW-0407">Ion channel</keyword>
<keyword id="KW-0406">Ion transport</keyword>
<keyword id="KW-0472">Membrane</keyword>
<keyword id="KW-0479">Metal-binding</keyword>
<keyword id="KW-1185">Reference proteome</keyword>
<keyword id="KW-0915">Sodium</keyword>
<keyword id="KW-0812">Transmembrane</keyword>
<keyword id="KW-1133">Transmembrane helix</keyword>
<keyword id="KW-0813">Transport</keyword>
<name>FLUC2_MYCBO</name>
<protein>
    <recommendedName>
        <fullName evidence="1">Fluoride-specific ion channel FluC 2</fullName>
    </recommendedName>
</protein>
<proteinExistence type="inferred from homology"/>
<evidence type="ECO:0000255" key="1">
    <source>
        <dbReference type="HAMAP-Rule" id="MF_00454"/>
    </source>
</evidence>
<organism>
    <name type="scientific">Mycobacterium bovis (strain ATCC BAA-935 / AF2122/97)</name>
    <dbReference type="NCBI Taxonomy" id="233413"/>
    <lineage>
        <taxon>Bacteria</taxon>
        <taxon>Bacillati</taxon>
        <taxon>Actinomycetota</taxon>
        <taxon>Actinomycetes</taxon>
        <taxon>Mycobacteriales</taxon>
        <taxon>Mycobacteriaceae</taxon>
        <taxon>Mycobacterium</taxon>
        <taxon>Mycobacterium tuberculosis complex</taxon>
    </lineage>
</organism>
<feature type="chain" id="PRO_0000110134" description="Fluoride-specific ion channel FluC 2">
    <location>
        <begin position="1"/>
        <end position="126"/>
    </location>
</feature>
<feature type="transmembrane region" description="Helical" evidence="1">
    <location>
        <begin position="5"/>
        <end position="25"/>
    </location>
</feature>
<feature type="transmembrane region" description="Helical" evidence="1">
    <location>
        <begin position="44"/>
        <end position="64"/>
    </location>
</feature>
<feature type="transmembrane region" description="Helical" evidence="1">
    <location>
        <begin position="68"/>
        <end position="88"/>
    </location>
</feature>
<feature type="transmembrane region" description="Helical" evidence="1">
    <location>
        <begin position="99"/>
        <end position="119"/>
    </location>
</feature>
<feature type="binding site" evidence="1">
    <location>
        <position position="78"/>
    </location>
    <ligand>
        <name>Na(+)</name>
        <dbReference type="ChEBI" id="CHEBI:29101"/>
        <note>structural</note>
    </ligand>
</feature>
<feature type="binding site" evidence="1">
    <location>
        <position position="81"/>
    </location>
    <ligand>
        <name>Na(+)</name>
        <dbReference type="ChEBI" id="CHEBI:29101"/>
        <note>structural</note>
    </ligand>
</feature>